<protein>
    <recommendedName>
        <fullName evidence="1">Tyrosine--tRNA ligase</fullName>
        <ecNumber evidence="1 2 3">6.1.1.1</ecNumber>
    </recommendedName>
    <alternativeName>
        <fullName evidence="4">TyrRZ</fullName>
    </alternativeName>
    <alternativeName>
        <fullName evidence="1 4">Tyrosyl-tRNA synthetase</fullName>
        <shortName evidence="1 4">TyrRS</shortName>
    </alternativeName>
</protein>
<gene>
    <name evidence="1" type="primary">tyrS</name>
    <name evidence="4" type="synonym">tyrZ</name>
</gene>
<dbReference type="EC" id="6.1.1.1" evidence="1 2 3"/>
<dbReference type="EMBL" id="X79010">
    <property type="protein sequence ID" value="CAA55643.1"/>
    <property type="molecule type" value="Genomic_DNA"/>
</dbReference>
<dbReference type="PIR" id="A55515">
    <property type="entry name" value="A55515"/>
</dbReference>
<dbReference type="SMR" id="P41256"/>
<dbReference type="SABIO-RK" id="P41256"/>
<dbReference type="GO" id="GO:0005829">
    <property type="term" value="C:cytosol"/>
    <property type="evidence" value="ECO:0007669"/>
    <property type="project" value="TreeGrafter"/>
</dbReference>
<dbReference type="GO" id="GO:0005524">
    <property type="term" value="F:ATP binding"/>
    <property type="evidence" value="ECO:0007669"/>
    <property type="project" value="UniProtKB-UniRule"/>
</dbReference>
<dbReference type="GO" id="GO:0003723">
    <property type="term" value="F:RNA binding"/>
    <property type="evidence" value="ECO:0007669"/>
    <property type="project" value="UniProtKB-KW"/>
</dbReference>
<dbReference type="GO" id="GO:0004831">
    <property type="term" value="F:tyrosine-tRNA ligase activity"/>
    <property type="evidence" value="ECO:0007669"/>
    <property type="project" value="UniProtKB-UniRule"/>
</dbReference>
<dbReference type="GO" id="GO:0006437">
    <property type="term" value="P:tyrosyl-tRNA aminoacylation"/>
    <property type="evidence" value="ECO:0007669"/>
    <property type="project" value="UniProtKB-UniRule"/>
</dbReference>
<dbReference type="CDD" id="cd00165">
    <property type="entry name" value="S4"/>
    <property type="match status" value="1"/>
</dbReference>
<dbReference type="CDD" id="cd00805">
    <property type="entry name" value="TyrRS_core"/>
    <property type="match status" value="1"/>
</dbReference>
<dbReference type="FunFam" id="3.40.50.620:FF:000061">
    <property type="entry name" value="Tyrosine--tRNA ligase"/>
    <property type="match status" value="1"/>
</dbReference>
<dbReference type="Gene3D" id="3.40.50.620">
    <property type="entry name" value="HUPs"/>
    <property type="match status" value="1"/>
</dbReference>
<dbReference type="Gene3D" id="3.10.290.10">
    <property type="entry name" value="RNA-binding S4 domain"/>
    <property type="match status" value="1"/>
</dbReference>
<dbReference type="Gene3D" id="1.10.240.10">
    <property type="entry name" value="Tyrosyl-Transfer RNA Synthetase"/>
    <property type="match status" value="1"/>
</dbReference>
<dbReference type="HAMAP" id="MF_02007">
    <property type="entry name" value="Tyr_tRNA_synth_type2"/>
    <property type="match status" value="1"/>
</dbReference>
<dbReference type="InterPro" id="IPR002305">
    <property type="entry name" value="aa-tRNA-synth_Ic"/>
</dbReference>
<dbReference type="InterPro" id="IPR014729">
    <property type="entry name" value="Rossmann-like_a/b/a_fold"/>
</dbReference>
<dbReference type="InterPro" id="IPR002942">
    <property type="entry name" value="S4_RNA-bd"/>
</dbReference>
<dbReference type="InterPro" id="IPR036986">
    <property type="entry name" value="S4_RNA-bd_sf"/>
</dbReference>
<dbReference type="InterPro" id="IPR002307">
    <property type="entry name" value="Tyr-tRNA-ligase"/>
</dbReference>
<dbReference type="InterPro" id="IPR024088">
    <property type="entry name" value="Tyr-tRNA-ligase_bac-type"/>
</dbReference>
<dbReference type="InterPro" id="IPR024108">
    <property type="entry name" value="Tyr-tRNA-ligase_bac_2"/>
</dbReference>
<dbReference type="NCBIfam" id="TIGR00234">
    <property type="entry name" value="tyrS"/>
    <property type="match status" value="1"/>
</dbReference>
<dbReference type="PANTHER" id="PTHR11766:SF1">
    <property type="entry name" value="TYROSINE--TRNA LIGASE"/>
    <property type="match status" value="1"/>
</dbReference>
<dbReference type="PANTHER" id="PTHR11766">
    <property type="entry name" value="TYROSYL-TRNA SYNTHETASE"/>
    <property type="match status" value="1"/>
</dbReference>
<dbReference type="Pfam" id="PF00579">
    <property type="entry name" value="tRNA-synt_1b"/>
    <property type="match status" value="1"/>
</dbReference>
<dbReference type="PRINTS" id="PR01040">
    <property type="entry name" value="TRNASYNTHTYR"/>
</dbReference>
<dbReference type="SMART" id="SM00363">
    <property type="entry name" value="S4"/>
    <property type="match status" value="1"/>
</dbReference>
<dbReference type="SUPFAM" id="SSF55174">
    <property type="entry name" value="Alpha-L RNA-binding motif"/>
    <property type="match status" value="1"/>
</dbReference>
<dbReference type="SUPFAM" id="SSF52374">
    <property type="entry name" value="Nucleotidylyl transferase"/>
    <property type="match status" value="1"/>
</dbReference>
<dbReference type="PROSITE" id="PS50889">
    <property type="entry name" value="S4"/>
    <property type="match status" value="1"/>
</dbReference>
<sequence>MTMKHQDAFEQIAFGTVDMLPEGEMLARLAAAQRDNRPLRIKLGMDPTAPDLHLGAYVLLHKARQFQDLGHRLLFVIGDFTAMIGDPTGKSVTRKALSREEVVANAATYRPQVFKILDPERTEVMFNSEWLGALRPEELIQIAACYTVARMLERDDFNKRYSANQPIAIHEFLYPLLQGYDSVAIKADVELGGTDQRFNLLVGRELQREYGQKPQLVLTMPILEGLDGVQKMSKSLGNFIAVEDPPAEMFGKIMSISDFLMWRYYALLSRVPAVEQTRLQKEAASGARNPRDIKLDLAGELVRRFHGTAAAQEAHIAFLARFQRHETPEDLPLQAIKLSEAPRLSQLLVQVHLAASTSEAMRKMKEGAVRVDWRRVVDPATILALDAVYLLQFGKRHFARVALQKGE</sequence>
<reference key="1">
    <citation type="journal article" date="1994" name="J. Bacteriol.">
        <title>Thiobacillus ferrooxidans tyrosyl-tRNA synthetase functions in vivo in Escherichia coli.</title>
        <authorList>
            <person name="Salazar O."/>
            <person name="Sagredo B."/>
            <person name="Jedlicki E."/>
            <person name="Soell D."/>
            <person name="Weygand-Durasevic I."/>
            <person name="Orellana O."/>
        </authorList>
    </citation>
    <scope>NUCLEOTIDE SEQUENCE [GENOMIC DNA]</scope>
    <scope>CATALYTIC ACTIVITY</scope>
    <source>
        <strain>Torma</strain>
    </source>
</reference>
<reference key="2">
    <citation type="journal article" date="2001" name="FEBS Lett.">
        <title>Conserved amino acids near the carboxy terminus of bacterial tyrosyl-tRNA synthetase are involved in tRNA and Tyr-AMP binding.</title>
        <authorList>
            <person name="Salazar J.C."/>
            <person name="Zuniga R."/>
            <person name="Lefimil C."/>
            <person name="Soell D."/>
            <person name="Orellana O."/>
        </authorList>
    </citation>
    <scope>FUNCTION</scope>
    <scope>CATALYTIC ACTIVITY</scope>
    <scope>BIOPHYSICOCHEMICAL PROPERTIES</scope>
    <scope>MUTAGENESIS OF HIS-53; HIS-306; SER-356 AND LYS-395</scope>
    <scope>SUBUNIT</scope>
</reference>
<name>SYY_ACIFR</name>
<keyword id="KW-0030">Aminoacyl-tRNA synthetase</keyword>
<keyword id="KW-0067">ATP-binding</keyword>
<keyword id="KW-0963">Cytoplasm</keyword>
<keyword id="KW-0436">Ligase</keyword>
<keyword id="KW-0547">Nucleotide-binding</keyword>
<keyword id="KW-0648">Protein biosynthesis</keyword>
<keyword id="KW-0694">RNA-binding</keyword>
<accession>P41256</accession>
<feature type="chain" id="PRO_0000055666" description="Tyrosine--tRNA ligase">
    <location>
        <begin position="1"/>
        <end position="407"/>
    </location>
</feature>
<feature type="domain" description="S4 RNA-binding" evidence="1">
    <location>
        <begin position="342"/>
        <end position="403"/>
    </location>
</feature>
<feature type="short sequence motif" description="'HIGH' region" evidence="1">
    <location>
        <begin position="47"/>
        <end position="56"/>
    </location>
</feature>
<feature type="short sequence motif" description="'KMSKS' region" evidence="1">
    <location>
        <begin position="231"/>
        <end position="235"/>
    </location>
</feature>
<feature type="binding site" evidence="1">
    <location>
        <position position="234"/>
    </location>
    <ligand>
        <name>ATP</name>
        <dbReference type="ChEBI" id="CHEBI:30616"/>
    </ligand>
</feature>
<feature type="mutagenesis site" description="Does not complement the tyrS mutation in E.coli." evidence="2">
    <original>H</original>
    <variation>A</variation>
    <location>
        <position position="53"/>
    </location>
</feature>
<feature type="mutagenesis site" description="Does not complement the tyrS mutation in E.coli. 3-fold decrease in kcat for amino acid activation, without effect on Km for tyrosine or ATP." evidence="2">
    <original>H</original>
    <variation>A</variation>
    <location>
        <position position="306"/>
    </location>
</feature>
<feature type="mutagenesis site" description="Does not complement the tyrS mutation in E.coli." evidence="2">
    <original>H</original>
    <variation>D</variation>
    <location>
        <position position="306"/>
    </location>
</feature>
<feature type="mutagenesis site" description="Does not complement the tyrS mutation in E.coli. 7-fold increase in Km for E.coli tRNA, without effect on other kinetic parameters." evidence="2">
    <original>S</original>
    <variation>A</variation>
    <location>
        <position position="356"/>
    </location>
</feature>
<feature type="mutagenesis site" description="Complements the tyrS mutation in E.coli very poorly. 17-fold increase in Km for E.coli tRNA, without effect on Km for ATP or tyrosine." evidence="2">
    <original>K</original>
    <variation>N</variation>
    <location>
        <position position="395"/>
    </location>
</feature>
<comment type="function">
    <text evidence="1 2">Catalyzes the attachment of tyrosine to tRNA(Tyr) in a two-step reaction: tyrosine is first activated by ATP to form Tyr-AMP and then transferred to the acceptor end of tRNA(Tyr).</text>
</comment>
<comment type="catalytic activity">
    <reaction evidence="1 2 3">
        <text>tRNA(Tyr) + L-tyrosine + ATP = L-tyrosyl-tRNA(Tyr) + AMP + diphosphate + H(+)</text>
        <dbReference type="Rhea" id="RHEA:10220"/>
        <dbReference type="Rhea" id="RHEA-COMP:9706"/>
        <dbReference type="Rhea" id="RHEA-COMP:9707"/>
        <dbReference type="ChEBI" id="CHEBI:15378"/>
        <dbReference type="ChEBI" id="CHEBI:30616"/>
        <dbReference type="ChEBI" id="CHEBI:33019"/>
        <dbReference type="ChEBI" id="CHEBI:58315"/>
        <dbReference type="ChEBI" id="CHEBI:78442"/>
        <dbReference type="ChEBI" id="CHEBI:78536"/>
        <dbReference type="ChEBI" id="CHEBI:456215"/>
        <dbReference type="EC" id="6.1.1.1"/>
    </reaction>
</comment>
<comment type="biophysicochemical properties">
    <kinetics>
        <KM evidence="2">0.13 mM for ATP</KM>
        <KM evidence="2">26.8 uM for tyrosine</KM>
        <KM evidence="2">2.54 uM for tRNA(Tyr)</KM>
        <text evidence="2">kcat is 7.7 sec(-1).</text>
    </kinetics>
</comment>
<comment type="subunit">
    <text evidence="1 2">Homodimer.</text>
</comment>
<comment type="subcellular location">
    <subcellularLocation>
        <location evidence="1">Cytoplasm</location>
    </subcellularLocation>
</comment>
<comment type="similarity">
    <text evidence="1 5">Belongs to the class-I aminoacyl-tRNA synthetase family. TyrS type 2 subfamily.</text>
</comment>
<organism>
    <name type="scientific">Acidithiobacillus ferrooxidans</name>
    <name type="common">Thiobacillus ferrooxidans</name>
    <dbReference type="NCBI Taxonomy" id="920"/>
    <lineage>
        <taxon>Bacteria</taxon>
        <taxon>Pseudomonadati</taxon>
        <taxon>Pseudomonadota</taxon>
        <taxon>Acidithiobacillia</taxon>
        <taxon>Acidithiobacillales</taxon>
        <taxon>Acidithiobacillaceae</taxon>
        <taxon>Acidithiobacillus</taxon>
    </lineage>
</organism>
<proteinExistence type="evidence at protein level"/>
<evidence type="ECO:0000255" key="1">
    <source>
        <dbReference type="HAMAP-Rule" id="MF_02007"/>
    </source>
</evidence>
<evidence type="ECO:0000269" key="2">
    <source>
    </source>
</evidence>
<evidence type="ECO:0000269" key="3">
    <source>
    </source>
</evidence>
<evidence type="ECO:0000303" key="4">
    <source>
    </source>
</evidence>
<evidence type="ECO:0000305" key="5"/>